<evidence type="ECO:0000255" key="1">
    <source>
        <dbReference type="HAMAP-Rule" id="MF_01367"/>
    </source>
</evidence>
<evidence type="ECO:0000305" key="2"/>
<name>RL14_METPP</name>
<reference key="1">
    <citation type="journal article" date="2007" name="J. Bacteriol.">
        <title>Whole-genome analysis of the methyl tert-butyl ether-degrading beta-proteobacterium Methylibium petroleiphilum PM1.</title>
        <authorList>
            <person name="Kane S.R."/>
            <person name="Chakicherla A.Y."/>
            <person name="Chain P.S.G."/>
            <person name="Schmidt R."/>
            <person name="Shin M.W."/>
            <person name="Legler T.C."/>
            <person name="Scow K.M."/>
            <person name="Larimer F.W."/>
            <person name="Lucas S.M."/>
            <person name="Richardson P.M."/>
            <person name="Hristova K.R."/>
        </authorList>
    </citation>
    <scope>NUCLEOTIDE SEQUENCE [LARGE SCALE GENOMIC DNA]</scope>
    <source>
        <strain>ATCC BAA-1232 / LMG 22953 / PM1</strain>
    </source>
</reference>
<feature type="chain" id="PRO_1000055632" description="Large ribosomal subunit protein uL14">
    <location>
        <begin position="1"/>
        <end position="122"/>
    </location>
</feature>
<comment type="function">
    <text evidence="1">Binds to 23S rRNA. Forms part of two intersubunit bridges in the 70S ribosome.</text>
</comment>
<comment type="subunit">
    <text evidence="1">Part of the 50S ribosomal subunit. Forms a cluster with proteins L3 and L19. In the 70S ribosome, L14 and L19 interact and together make contacts with the 16S rRNA in bridges B5 and B8.</text>
</comment>
<comment type="similarity">
    <text evidence="1">Belongs to the universal ribosomal protein uL14 family.</text>
</comment>
<gene>
    <name evidence="1" type="primary">rplN</name>
    <name type="ordered locus">Mpe_A3432</name>
</gene>
<accession>A2SLE6</accession>
<protein>
    <recommendedName>
        <fullName evidence="1">Large ribosomal subunit protein uL14</fullName>
    </recommendedName>
    <alternativeName>
        <fullName evidence="2">50S ribosomal protein L14</fullName>
    </alternativeName>
</protein>
<dbReference type="EMBL" id="CP000555">
    <property type="protein sequence ID" value="ABM96385.1"/>
    <property type="molecule type" value="Genomic_DNA"/>
</dbReference>
<dbReference type="RefSeq" id="WP_011831006.1">
    <property type="nucleotide sequence ID" value="NC_008825.1"/>
</dbReference>
<dbReference type="SMR" id="A2SLE6"/>
<dbReference type="STRING" id="420662.Mpe_A3432"/>
<dbReference type="KEGG" id="mpt:Mpe_A3432"/>
<dbReference type="eggNOG" id="COG0093">
    <property type="taxonomic scope" value="Bacteria"/>
</dbReference>
<dbReference type="HOGENOM" id="CLU_095071_2_1_4"/>
<dbReference type="Proteomes" id="UP000000366">
    <property type="component" value="Chromosome"/>
</dbReference>
<dbReference type="GO" id="GO:0022625">
    <property type="term" value="C:cytosolic large ribosomal subunit"/>
    <property type="evidence" value="ECO:0007669"/>
    <property type="project" value="TreeGrafter"/>
</dbReference>
<dbReference type="GO" id="GO:0070180">
    <property type="term" value="F:large ribosomal subunit rRNA binding"/>
    <property type="evidence" value="ECO:0007669"/>
    <property type="project" value="TreeGrafter"/>
</dbReference>
<dbReference type="GO" id="GO:0003735">
    <property type="term" value="F:structural constituent of ribosome"/>
    <property type="evidence" value="ECO:0007669"/>
    <property type="project" value="InterPro"/>
</dbReference>
<dbReference type="GO" id="GO:0006412">
    <property type="term" value="P:translation"/>
    <property type="evidence" value="ECO:0007669"/>
    <property type="project" value="UniProtKB-UniRule"/>
</dbReference>
<dbReference type="CDD" id="cd00337">
    <property type="entry name" value="Ribosomal_uL14"/>
    <property type="match status" value="1"/>
</dbReference>
<dbReference type="FunFam" id="2.40.150.20:FF:000001">
    <property type="entry name" value="50S ribosomal protein L14"/>
    <property type="match status" value="1"/>
</dbReference>
<dbReference type="Gene3D" id="2.40.150.20">
    <property type="entry name" value="Ribosomal protein L14"/>
    <property type="match status" value="1"/>
</dbReference>
<dbReference type="HAMAP" id="MF_01367">
    <property type="entry name" value="Ribosomal_uL14"/>
    <property type="match status" value="1"/>
</dbReference>
<dbReference type="InterPro" id="IPR000218">
    <property type="entry name" value="Ribosomal_uL14"/>
</dbReference>
<dbReference type="InterPro" id="IPR005745">
    <property type="entry name" value="Ribosomal_uL14_bac-type"/>
</dbReference>
<dbReference type="InterPro" id="IPR019972">
    <property type="entry name" value="Ribosomal_uL14_CS"/>
</dbReference>
<dbReference type="InterPro" id="IPR036853">
    <property type="entry name" value="Ribosomal_uL14_sf"/>
</dbReference>
<dbReference type="NCBIfam" id="TIGR01067">
    <property type="entry name" value="rplN_bact"/>
    <property type="match status" value="1"/>
</dbReference>
<dbReference type="PANTHER" id="PTHR11761">
    <property type="entry name" value="50S/60S RIBOSOMAL PROTEIN L14/L23"/>
    <property type="match status" value="1"/>
</dbReference>
<dbReference type="PANTHER" id="PTHR11761:SF3">
    <property type="entry name" value="LARGE RIBOSOMAL SUBUNIT PROTEIN UL14M"/>
    <property type="match status" value="1"/>
</dbReference>
<dbReference type="Pfam" id="PF00238">
    <property type="entry name" value="Ribosomal_L14"/>
    <property type="match status" value="1"/>
</dbReference>
<dbReference type="SMART" id="SM01374">
    <property type="entry name" value="Ribosomal_L14"/>
    <property type="match status" value="1"/>
</dbReference>
<dbReference type="SUPFAM" id="SSF50193">
    <property type="entry name" value="Ribosomal protein L14"/>
    <property type="match status" value="1"/>
</dbReference>
<dbReference type="PROSITE" id="PS00049">
    <property type="entry name" value="RIBOSOMAL_L14"/>
    <property type="match status" value="1"/>
</dbReference>
<keyword id="KW-1185">Reference proteome</keyword>
<keyword id="KW-0687">Ribonucleoprotein</keyword>
<keyword id="KW-0689">Ribosomal protein</keyword>
<keyword id="KW-0694">RNA-binding</keyword>
<keyword id="KW-0699">rRNA-binding</keyword>
<proteinExistence type="inferred from homology"/>
<sequence>MIQMQSRLDVADNTGAKSVMCIKVLGGSKRRYAGIGDVIKVSIKEAAPRGRVKKGEVYSAVVVRTAKGVRRQDGSLVKFDGNAAVLLNAKLEPIGTRIFGPVTRELRTERFMKIVSLAPEVL</sequence>
<organism>
    <name type="scientific">Methylibium petroleiphilum (strain ATCC BAA-1232 / LMG 22953 / PM1)</name>
    <dbReference type="NCBI Taxonomy" id="420662"/>
    <lineage>
        <taxon>Bacteria</taxon>
        <taxon>Pseudomonadati</taxon>
        <taxon>Pseudomonadota</taxon>
        <taxon>Betaproteobacteria</taxon>
        <taxon>Burkholderiales</taxon>
        <taxon>Sphaerotilaceae</taxon>
        <taxon>Methylibium</taxon>
    </lineage>
</organism>